<keyword id="KW-0066">ATP synthesis</keyword>
<keyword id="KW-0067">ATP-binding</keyword>
<keyword id="KW-0997">Cell inner membrane</keyword>
<keyword id="KW-1003">Cell membrane</keyword>
<keyword id="KW-0139">CF(1)</keyword>
<keyword id="KW-0375">Hydrogen ion transport</keyword>
<keyword id="KW-0406">Ion transport</keyword>
<keyword id="KW-0472">Membrane</keyword>
<keyword id="KW-0547">Nucleotide-binding</keyword>
<keyword id="KW-1278">Translocase</keyword>
<keyword id="KW-0813">Transport</keyword>
<proteinExistence type="inferred from homology"/>
<sequence>MATGKIIQVIGAVVDVEFPQDAVPKVYNALEVEGTTEKLVLEVQQQLGGGVVRCIAMGSSDGLSRGLKVTNLEHPIEVPVGKATLGRIMNVLGEPIDMKGPIGEEERWAIHREAPSYEELASSQDLLETGIKVMDLICPFAKGGKVGLFGGAGVGKTVNMMELIRNIAIEHSGYSVFAGVGERTREGNDFYHEMTDSNVLDKVSLVYGQMNEPPGNRLRVALTGLTMAEKFRDEGRDVLLFIDNIYRYTLAGTEVSALLGRMPSAVGYQPTLAEEMGVLQERITSTKTGSITSVQAVYVPADDLTDPSPATTFAHLDATVVLSRQIASLGIYPAVDPLDSTSRQLDPLVVGQEHYDVARGVQSILQRYQELKDIIAILGMDELSEDDKLVVSRARKIQRFLSQPFFVAEVFTGSPGKFVSLKDTIRGFKGIMNGDYDHLPEQAFYMVGTIEEAVEKAKKL</sequence>
<organism>
    <name type="scientific">Yersinia pestis bv. Antiqua (strain Antiqua)</name>
    <dbReference type="NCBI Taxonomy" id="360102"/>
    <lineage>
        <taxon>Bacteria</taxon>
        <taxon>Pseudomonadati</taxon>
        <taxon>Pseudomonadota</taxon>
        <taxon>Gammaproteobacteria</taxon>
        <taxon>Enterobacterales</taxon>
        <taxon>Yersiniaceae</taxon>
        <taxon>Yersinia</taxon>
    </lineage>
</organism>
<accession>Q1C095</accession>
<feature type="chain" id="PRO_0000254435" description="ATP synthase subunit beta">
    <location>
        <begin position="1"/>
        <end position="460"/>
    </location>
</feature>
<feature type="binding site" evidence="1">
    <location>
        <begin position="150"/>
        <end position="157"/>
    </location>
    <ligand>
        <name>ATP</name>
        <dbReference type="ChEBI" id="CHEBI:30616"/>
    </ligand>
</feature>
<dbReference type="EC" id="7.1.2.2" evidence="1"/>
<dbReference type="EMBL" id="CP000308">
    <property type="protein sequence ID" value="ABG16127.1"/>
    <property type="molecule type" value="Genomic_DNA"/>
</dbReference>
<dbReference type="RefSeq" id="WP_002220753.1">
    <property type="nucleotide sequence ID" value="NZ_CP009906.1"/>
</dbReference>
<dbReference type="SMR" id="Q1C095"/>
<dbReference type="GeneID" id="57974603"/>
<dbReference type="KEGG" id="ypa:YPA_4166"/>
<dbReference type="Proteomes" id="UP000001971">
    <property type="component" value="Chromosome"/>
</dbReference>
<dbReference type="GO" id="GO:0005886">
    <property type="term" value="C:plasma membrane"/>
    <property type="evidence" value="ECO:0007669"/>
    <property type="project" value="UniProtKB-SubCell"/>
</dbReference>
<dbReference type="GO" id="GO:0045259">
    <property type="term" value="C:proton-transporting ATP synthase complex"/>
    <property type="evidence" value="ECO:0007669"/>
    <property type="project" value="UniProtKB-KW"/>
</dbReference>
<dbReference type="GO" id="GO:0005524">
    <property type="term" value="F:ATP binding"/>
    <property type="evidence" value="ECO:0007669"/>
    <property type="project" value="UniProtKB-UniRule"/>
</dbReference>
<dbReference type="GO" id="GO:0016887">
    <property type="term" value="F:ATP hydrolysis activity"/>
    <property type="evidence" value="ECO:0007669"/>
    <property type="project" value="InterPro"/>
</dbReference>
<dbReference type="GO" id="GO:0046933">
    <property type="term" value="F:proton-transporting ATP synthase activity, rotational mechanism"/>
    <property type="evidence" value="ECO:0007669"/>
    <property type="project" value="UniProtKB-UniRule"/>
</dbReference>
<dbReference type="CDD" id="cd18110">
    <property type="entry name" value="ATP-synt_F1_beta_C"/>
    <property type="match status" value="1"/>
</dbReference>
<dbReference type="CDD" id="cd18115">
    <property type="entry name" value="ATP-synt_F1_beta_N"/>
    <property type="match status" value="1"/>
</dbReference>
<dbReference type="CDD" id="cd01133">
    <property type="entry name" value="F1-ATPase_beta_CD"/>
    <property type="match status" value="1"/>
</dbReference>
<dbReference type="FunFam" id="1.10.1140.10:FF:000001">
    <property type="entry name" value="ATP synthase subunit beta"/>
    <property type="match status" value="1"/>
</dbReference>
<dbReference type="FunFam" id="2.40.10.170:FF:000003">
    <property type="entry name" value="ATP synthase subunit beta"/>
    <property type="match status" value="1"/>
</dbReference>
<dbReference type="FunFam" id="3.40.50.300:FF:000004">
    <property type="entry name" value="ATP synthase subunit beta"/>
    <property type="match status" value="1"/>
</dbReference>
<dbReference type="Gene3D" id="2.40.10.170">
    <property type="match status" value="1"/>
</dbReference>
<dbReference type="Gene3D" id="1.10.1140.10">
    <property type="entry name" value="Bovine Mitochondrial F1-atpase, Atp Synthase Beta Chain, Chain D, domain 3"/>
    <property type="match status" value="1"/>
</dbReference>
<dbReference type="Gene3D" id="3.40.50.300">
    <property type="entry name" value="P-loop containing nucleotide triphosphate hydrolases"/>
    <property type="match status" value="1"/>
</dbReference>
<dbReference type="HAMAP" id="MF_01347">
    <property type="entry name" value="ATP_synth_beta_bact"/>
    <property type="match status" value="1"/>
</dbReference>
<dbReference type="InterPro" id="IPR003593">
    <property type="entry name" value="AAA+_ATPase"/>
</dbReference>
<dbReference type="InterPro" id="IPR055190">
    <property type="entry name" value="ATP-synt_VA_C"/>
</dbReference>
<dbReference type="InterPro" id="IPR005722">
    <property type="entry name" value="ATP_synth_F1_bsu"/>
</dbReference>
<dbReference type="InterPro" id="IPR020003">
    <property type="entry name" value="ATPase_a/bsu_AS"/>
</dbReference>
<dbReference type="InterPro" id="IPR050053">
    <property type="entry name" value="ATPase_alpha/beta_chains"/>
</dbReference>
<dbReference type="InterPro" id="IPR004100">
    <property type="entry name" value="ATPase_F1/V1/A1_a/bsu_N"/>
</dbReference>
<dbReference type="InterPro" id="IPR036121">
    <property type="entry name" value="ATPase_F1/V1/A1_a/bsu_N_sf"/>
</dbReference>
<dbReference type="InterPro" id="IPR000194">
    <property type="entry name" value="ATPase_F1/V1/A1_a/bsu_nucl-bd"/>
</dbReference>
<dbReference type="InterPro" id="IPR024034">
    <property type="entry name" value="ATPase_F1/V1_b/a_C"/>
</dbReference>
<dbReference type="InterPro" id="IPR027417">
    <property type="entry name" value="P-loop_NTPase"/>
</dbReference>
<dbReference type="NCBIfam" id="TIGR01039">
    <property type="entry name" value="atpD"/>
    <property type="match status" value="1"/>
</dbReference>
<dbReference type="PANTHER" id="PTHR15184">
    <property type="entry name" value="ATP SYNTHASE"/>
    <property type="match status" value="1"/>
</dbReference>
<dbReference type="PANTHER" id="PTHR15184:SF71">
    <property type="entry name" value="ATP SYNTHASE SUBUNIT BETA, MITOCHONDRIAL"/>
    <property type="match status" value="1"/>
</dbReference>
<dbReference type="Pfam" id="PF00006">
    <property type="entry name" value="ATP-synt_ab"/>
    <property type="match status" value="1"/>
</dbReference>
<dbReference type="Pfam" id="PF02874">
    <property type="entry name" value="ATP-synt_ab_N"/>
    <property type="match status" value="1"/>
</dbReference>
<dbReference type="Pfam" id="PF22919">
    <property type="entry name" value="ATP-synt_VA_C"/>
    <property type="match status" value="1"/>
</dbReference>
<dbReference type="SMART" id="SM00382">
    <property type="entry name" value="AAA"/>
    <property type="match status" value="1"/>
</dbReference>
<dbReference type="SUPFAM" id="SSF47917">
    <property type="entry name" value="C-terminal domain of alpha and beta subunits of F1 ATP synthase"/>
    <property type="match status" value="1"/>
</dbReference>
<dbReference type="SUPFAM" id="SSF50615">
    <property type="entry name" value="N-terminal domain of alpha and beta subunits of F1 ATP synthase"/>
    <property type="match status" value="1"/>
</dbReference>
<dbReference type="SUPFAM" id="SSF52540">
    <property type="entry name" value="P-loop containing nucleoside triphosphate hydrolases"/>
    <property type="match status" value="1"/>
</dbReference>
<dbReference type="PROSITE" id="PS00152">
    <property type="entry name" value="ATPASE_ALPHA_BETA"/>
    <property type="match status" value="1"/>
</dbReference>
<name>ATPB_YERPA</name>
<evidence type="ECO:0000255" key="1">
    <source>
        <dbReference type="HAMAP-Rule" id="MF_01347"/>
    </source>
</evidence>
<reference key="1">
    <citation type="journal article" date="2006" name="J. Bacteriol.">
        <title>Complete genome sequence of Yersinia pestis strains Antiqua and Nepal516: evidence of gene reduction in an emerging pathogen.</title>
        <authorList>
            <person name="Chain P.S.G."/>
            <person name="Hu P."/>
            <person name="Malfatti S.A."/>
            <person name="Radnedge L."/>
            <person name="Larimer F."/>
            <person name="Vergez L.M."/>
            <person name="Worsham P."/>
            <person name="Chu M.C."/>
            <person name="Andersen G.L."/>
        </authorList>
    </citation>
    <scope>NUCLEOTIDE SEQUENCE [LARGE SCALE GENOMIC DNA]</scope>
    <source>
        <strain>Antiqua</strain>
    </source>
</reference>
<comment type="function">
    <text evidence="1">Produces ATP from ADP in the presence of a proton gradient across the membrane. The catalytic sites are hosted primarily by the beta subunits.</text>
</comment>
<comment type="catalytic activity">
    <reaction evidence="1">
        <text>ATP + H2O + 4 H(+)(in) = ADP + phosphate + 5 H(+)(out)</text>
        <dbReference type="Rhea" id="RHEA:57720"/>
        <dbReference type="ChEBI" id="CHEBI:15377"/>
        <dbReference type="ChEBI" id="CHEBI:15378"/>
        <dbReference type="ChEBI" id="CHEBI:30616"/>
        <dbReference type="ChEBI" id="CHEBI:43474"/>
        <dbReference type="ChEBI" id="CHEBI:456216"/>
        <dbReference type="EC" id="7.1.2.2"/>
    </reaction>
</comment>
<comment type="subunit">
    <text evidence="1">F-type ATPases have 2 components, CF(1) - the catalytic core - and CF(0) - the membrane proton channel. CF(1) has five subunits: alpha(3), beta(3), gamma(1), delta(1), epsilon(1). CF(0) has three main subunits: a(1), b(2) and c(9-12). The alpha and beta chains form an alternating ring which encloses part of the gamma chain. CF(1) is attached to CF(0) by a central stalk formed by the gamma and epsilon chains, while a peripheral stalk is formed by the delta and b chains.</text>
</comment>
<comment type="subcellular location">
    <subcellularLocation>
        <location evidence="1">Cell inner membrane</location>
        <topology evidence="1">Peripheral membrane protein</topology>
    </subcellularLocation>
</comment>
<comment type="similarity">
    <text evidence="1">Belongs to the ATPase alpha/beta chains family.</text>
</comment>
<gene>
    <name evidence="1" type="primary">atpD</name>
    <name type="ordered locus">YPA_4166</name>
</gene>
<protein>
    <recommendedName>
        <fullName evidence="1">ATP synthase subunit beta</fullName>
        <ecNumber evidence="1">7.1.2.2</ecNumber>
    </recommendedName>
    <alternativeName>
        <fullName evidence="1">ATP synthase F1 sector subunit beta</fullName>
    </alternativeName>
    <alternativeName>
        <fullName evidence="1">F-ATPase subunit beta</fullName>
    </alternativeName>
</protein>